<accession>A0KJE0</accession>
<gene>
    <name evidence="1" type="primary">aat</name>
    <name type="ordered locus">AHA_1860</name>
</gene>
<evidence type="ECO:0000255" key="1">
    <source>
        <dbReference type="HAMAP-Rule" id="MF_00688"/>
    </source>
</evidence>
<organism>
    <name type="scientific">Aeromonas hydrophila subsp. hydrophila (strain ATCC 7966 / DSM 30187 / BCRC 13018 / CCUG 14551 / JCM 1027 / KCTC 2358 / NCIMB 9240 / NCTC 8049)</name>
    <dbReference type="NCBI Taxonomy" id="380703"/>
    <lineage>
        <taxon>Bacteria</taxon>
        <taxon>Pseudomonadati</taxon>
        <taxon>Pseudomonadota</taxon>
        <taxon>Gammaproteobacteria</taxon>
        <taxon>Aeromonadales</taxon>
        <taxon>Aeromonadaceae</taxon>
        <taxon>Aeromonas</taxon>
    </lineage>
</organism>
<protein>
    <recommendedName>
        <fullName evidence="1">Leucyl/phenylalanyl-tRNA--protein transferase</fullName>
        <ecNumber evidence="1">2.3.2.6</ecNumber>
    </recommendedName>
    <alternativeName>
        <fullName evidence="1">L/F-transferase</fullName>
    </alternativeName>
    <alternativeName>
        <fullName evidence="1">Leucyltransferase</fullName>
    </alternativeName>
    <alternativeName>
        <fullName evidence="1">Phenyalanyltransferase</fullName>
    </alternativeName>
</protein>
<comment type="function">
    <text evidence="1">Functions in the N-end rule pathway of protein degradation where it conjugates Leu, Phe and, less efficiently, Met from aminoacyl-tRNAs to the N-termini of proteins containing an N-terminal arginine or lysine.</text>
</comment>
<comment type="catalytic activity">
    <reaction evidence="1">
        <text>N-terminal L-lysyl-[protein] + L-leucyl-tRNA(Leu) = N-terminal L-leucyl-L-lysyl-[protein] + tRNA(Leu) + H(+)</text>
        <dbReference type="Rhea" id="RHEA:12340"/>
        <dbReference type="Rhea" id="RHEA-COMP:9613"/>
        <dbReference type="Rhea" id="RHEA-COMP:9622"/>
        <dbReference type="Rhea" id="RHEA-COMP:12670"/>
        <dbReference type="Rhea" id="RHEA-COMP:12671"/>
        <dbReference type="ChEBI" id="CHEBI:15378"/>
        <dbReference type="ChEBI" id="CHEBI:65249"/>
        <dbReference type="ChEBI" id="CHEBI:78442"/>
        <dbReference type="ChEBI" id="CHEBI:78494"/>
        <dbReference type="ChEBI" id="CHEBI:133043"/>
        <dbReference type="EC" id="2.3.2.6"/>
    </reaction>
</comment>
<comment type="catalytic activity">
    <reaction evidence="1">
        <text>N-terminal L-arginyl-[protein] + L-leucyl-tRNA(Leu) = N-terminal L-leucyl-L-arginyl-[protein] + tRNA(Leu) + H(+)</text>
        <dbReference type="Rhea" id="RHEA:50416"/>
        <dbReference type="Rhea" id="RHEA-COMP:9613"/>
        <dbReference type="Rhea" id="RHEA-COMP:9622"/>
        <dbReference type="Rhea" id="RHEA-COMP:12672"/>
        <dbReference type="Rhea" id="RHEA-COMP:12673"/>
        <dbReference type="ChEBI" id="CHEBI:15378"/>
        <dbReference type="ChEBI" id="CHEBI:64719"/>
        <dbReference type="ChEBI" id="CHEBI:78442"/>
        <dbReference type="ChEBI" id="CHEBI:78494"/>
        <dbReference type="ChEBI" id="CHEBI:133044"/>
        <dbReference type="EC" id="2.3.2.6"/>
    </reaction>
</comment>
<comment type="catalytic activity">
    <reaction evidence="1">
        <text>L-phenylalanyl-tRNA(Phe) + an N-terminal L-alpha-aminoacyl-[protein] = an N-terminal L-phenylalanyl-L-alpha-aminoacyl-[protein] + tRNA(Phe)</text>
        <dbReference type="Rhea" id="RHEA:43632"/>
        <dbReference type="Rhea" id="RHEA-COMP:9668"/>
        <dbReference type="Rhea" id="RHEA-COMP:9699"/>
        <dbReference type="Rhea" id="RHEA-COMP:10636"/>
        <dbReference type="Rhea" id="RHEA-COMP:10637"/>
        <dbReference type="ChEBI" id="CHEBI:78442"/>
        <dbReference type="ChEBI" id="CHEBI:78531"/>
        <dbReference type="ChEBI" id="CHEBI:78597"/>
        <dbReference type="ChEBI" id="CHEBI:83561"/>
        <dbReference type="EC" id="2.3.2.6"/>
    </reaction>
</comment>
<comment type="subcellular location">
    <subcellularLocation>
        <location evidence="1">Cytoplasm</location>
    </subcellularLocation>
</comment>
<comment type="similarity">
    <text evidence="1">Belongs to the L/F-transferase family.</text>
</comment>
<proteinExistence type="inferred from homology"/>
<name>LFTR_AERHH</name>
<reference key="1">
    <citation type="journal article" date="2006" name="J. Bacteriol.">
        <title>Genome sequence of Aeromonas hydrophila ATCC 7966T: jack of all trades.</title>
        <authorList>
            <person name="Seshadri R."/>
            <person name="Joseph S.W."/>
            <person name="Chopra A.K."/>
            <person name="Sha J."/>
            <person name="Shaw J."/>
            <person name="Graf J."/>
            <person name="Haft D.H."/>
            <person name="Wu M."/>
            <person name="Ren Q."/>
            <person name="Rosovitz M.J."/>
            <person name="Madupu R."/>
            <person name="Tallon L."/>
            <person name="Kim M."/>
            <person name="Jin S."/>
            <person name="Vuong H."/>
            <person name="Stine O.C."/>
            <person name="Ali A."/>
            <person name="Horneman A.J."/>
            <person name="Heidelberg J.F."/>
        </authorList>
    </citation>
    <scope>NUCLEOTIDE SEQUENCE [LARGE SCALE GENOMIC DNA]</scope>
    <source>
        <strain>ATCC 7966 / DSM 30187 / BCRC 13018 / CCUG 14551 / JCM 1027 / KCTC 2358 / NCIMB 9240 / NCTC 8049</strain>
    </source>
</reference>
<sequence length="235" mass="26498">MSRYLTQLDDELCWFPDPEHALEEPNGLLAIGGDLSPARLLAAYHKGIFPWNEPHQPLLWWSPDPRGVIRPEQLHIGRTLRKFIRGTSFDISIDRAFNEVIAACAAPRRSASGTWISTPMIDAYRQLHRLGHAHSIEIWQEGQLQAGLYGLSLGRVFCGESMFSRIDNGAKLAMVALCQHFARHDGALIDCQMQNDFLATLGIEEWPRRQFLTTLAQLSRQPLAANCWQTGSILL</sequence>
<feature type="chain" id="PRO_0000304323" description="Leucyl/phenylalanyl-tRNA--protein transferase">
    <location>
        <begin position="1"/>
        <end position="235"/>
    </location>
</feature>
<keyword id="KW-0012">Acyltransferase</keyword>
<keyword id="KW-0963">Cytoplasm</keyword>
<keyword id="KW-1185">Reference proteome</keyword>
<keyword id="KW-0808">Transferase</keyword>
<dbReference type="EC" id="2.3.2.6" evidence="1"/>
<dbReference type="EMBL" id="CP000462">
    <property type="protein sequence ID" value="ABK36613.1"/>
    <property type="molecule type" value="Genomic_DNA"/>
</dbReference>
<dbReference type="RefSeq" id="WP_011705736.1">
    <property type="nucleotide sequence ID" value="NC_008570.1"/>
</dbReference>
<dbReference type="RefSeq" id="YP_856391.1">
    <property type="nucleotide sequence ID" value="NC_008570.1"/>
</dbReference>
<dbReference type="SMR" id="A0KJE0"/>
<dbReference type="STRING" id="380703.AHA_1860"/>
<dbReference type="EnsemblBacteria" id="ABK36613">
    <property type="protein sequence ID" value="ABK36613"/>
    <property type="gene ID" value="AHA_1860"/>
</dbReference>
<dbReference type="GeneID" id="4489214"/>
<dbReference type="KEGG" id="aha:AHA_1860"/>
<dbReference type="PATRIC" id="fig|380703.7.peg.1870"/>
<dbReference type="eggNOG" id="COG2360">
    <property type="taxonomic scope" value="Bacteria"/>
</dbReference>
<dbReference type="HOGENOM" id="CLU_075045_0_0_6"/>
<dbReference type="OrthoDB" id="9790282at2"/>
<dbReference type="Proteomes" id="UP000000756">
    <property type="component" value="Chromosome"/>
</dbReference>
<dbReference type="GO" id="GO:0005737">
    <property type="term" value="C:cytoplasm"/>
    <property type="evidence" value="ECO:0007669"/>
    <property type="project" value="UniProtKB-SubCell"/>
</dbReference>
<dbReference type="GO" id="GO:0008914">
    <property type="term" value="F:leucyl-tRNA--protein transferase activity"/>
    <property type="evidence" value="ECO:0007669"/>
    <property type="project" value="UniProtKB-UniRule"/>
</dbReference>
<dbReference type="GO" id="GO:0030163">
    <property type="term" value="P:protein catabolic process"/>
    <property type="evidence" value="ECO:0007669"/>
    <property type="project" value="UniProtKB-UniRule"/>
</dbReference>
<dbReference type="FunFam" id="3.30.70.3550:FF:000001">
    <property type="entry name" value="Leucyl/phenylalanyl-tRNA--protein transferase"/>
    <property type="match status" value="1"/>
</dbReference>
<dbReference type="FunFam" id="3.40.630.70:FF:000001">
    <property type="entry name" value="Leucyl/phenylalanyl-tRNA--protein transferase"/>
    <property type="match status" value="1"/>
</dbReference>
<dbReference type="Gene3D" id="3.40.630.70">
    <property type="entry name" value="Leucyl/phenylalanyl-tRNA-protein transferase, C-terminal domain"/>
    <property type="match status" value="1"/>
</dbReference>
<dbReference type="Gene3D" id="3.30.70.3550">
    <property type="entry name" value="Leucyl/phenylalanyl-tRNA-protein transferase, N-terminal domain"/>
    <property type="match status" value="1"/>
</dbReference>
<dbReference type="HAMAP" id="MF_00688">
    <property type="entry name" value="Leu_Phe_trans"/>
    <property type="match status" value="1"/>
</dbReference>
<dbReference type="InterPro" id="IPR016181">
    <property type="entry name" value="Acyl_CoA_acyltransferase"/>
</dbReference>
<dbReference type="InterPro" id="IPR004616">
    <property type="entry name" value="Leu/Phe-tRNA_Trfase"/>
</dbReference>
<dbReference type="InterPro" id="IPR042203">
    <property type="entry name" value="Leu/Phe-tRNA_Trfase_C"/>
</dbReference>
<dbReference type="InterPro" id="IPR042221">
    <property type="entry name" value="Leu/Phe-tRNA_Trfase_N"/>
</dbReference>
<dbReference type="NCBIfam" id="TIGR00667">
    <property type="entry name" value="aat"/>
    <property type="match status" value="1"/>
</dbReference>
<dbReference type="PANTHER" id="PTHR30098">
    <property type="entry name" value="LEUCYL/PHENYLALANYL-TRNA--PROTEIN TRANSFERASE"/>
    <property type="match status" value="1"/>
</dbReference>
<dbReference type="PANTHER" id="PTHR30098:SF2">
    <property type="entry name" value="LEUCYL_PHENYLALANYL-TRNA--PROTEIN TRANSFERASE"/>
    <property type="match status" value="1"/>
</dbReference>
<dbReference type="Pfam" id="PF03588">
    <property type="entry name" value="Leu_Phe_trans"/>
    <property type="match status" value="1"/>
</dbReference>
<dbReference type="SUPFAM" id="SSF55729">
    <property type="entry name" value="Acyl-CoA N-acyltransferases (Nat)"/>
    <property type="match status" value="1"/>
</dbReference>